<organism>
    <name type="scientific">Lactococcus lactis subsp. cremoris (strain SK11)</name>
    <dbReference type="NCBI Taxonomy" id="272622"/>
    <lineage>
        <taxon>Bacteria</taxon>
        <taxon>Bacillati</taxon>
        <taxon>Bacillota</taxon>
        <taxon>Bacilli</taxon>
        <taxon>Lactobacillales</taxon>
        <taxon>Streptococcaceae</taxon>
        <taxon>Lactococcus</taxon>
        <taxon>Lactococcus cremoris subsp. cremoris</taxon>
    </lineage>
</organism>
<protein>
    <recommendedName>
        <fullName evidence="1">Tryptophan synthase beta chain</fullName>
        <ecNumber evidence="1">4.2.1.20</ecNumber>
    </recommendedName>
</protein>
<keyword id="KW-0028">Amino-acid biosynthesis</keyword>
<keyword id="KW-0057">Aromatic amino acid biosynthesis</keyword>
<keyword id="KW-0456">Lyase</keyword>
<keyword id="KW-0663">Pyridoxal phosphate</keyword>
<keyword id="KW-0822">Tryptophan biosynthesis</keyword>
<proteinExistence type="inferred from homology"/>
<gene>
    <name evidence="1" type="primary">trpB</name>
    <name type="ordered locus">LACR_1549</name>
</gene>
<feature type="chain" id="PRO_1000018352" description="Tryptophan synthase beta chain">
    <location>
        <begin position="1"/>
        <end position="401"/>
    </location>
</feature>
<feature type="modified residue" description="N6-(pyridoxal phosphate)lysine" evidence="1">
    <location>
        <position position="91"/>
    </location>
</feature>
<reference key="1">
    <citation type="journal article" date="2006" name="Proc. Natl. Acad. Sci. U.S.A.">
        <title>Comparative genomics of the lactic acid bacteria.</title>
        <authorList>
            <person name="Makarova K.S."/>
            <person name="Slesarev A."/>
            <person name="Wolf Y.I."/>
            <person name="Sorokin A."/>
            <person name="Mirkin B."/>
            <person name="Koonin E.V."/>
            <person name="Pavlov A."/>
            <person name="Pavlova N."/>
            <person name="Karamychev V."/>
            <person name="Polouchine N."/>
            <person name="Shakhova V."/>
            <person name="Grigoriev I."/>
            <person name="Lou Y."/>
            <person name="Rohksar D."/>
            <person name="Lucas S."/>
            <person name="Huang K."/>
            <person name="Goodstein D.M."/>
            <person name="Hawkins T."/>
            <person name="Plengvidhya V."/>
            <person name="Welker D."/>
            <person name="Hughes J."/>
            <person name="Goh Y."/>
            <person name="Benson A."/>
            <person name="Baldwin K."/>
            <person name="Lee J.-H."/>
            <person name="Diaz-Muniz I."/>
            <person name="Dosti B."/>
            <person name="Smeianov V."/>
            <person name="Wechter W."/>
            <person name="Barabote R."/>
            <person name="Lorca G."/>
            <person name="Altermann E."/>
            <person name="Barrangou R."/>
            <person name="Ganesan B."/>
            <person name="Xie Y."/>
            <person name="Rawsthorne H."/>
            <person name="Tamir D."/>
            <person name="Parker C."/>
            <person name="Breidt F."/>
            <person name="Broadbent J.R."/>
            <person name="Hutkins R."/>
            <person name="O'Sullivan D."/>
            <person name="Steele J."/>
            <person name="Unlu G."/>
            <person name="Saier M.H. Jr."/>
            <person name="Klaenhammer T."/>
            <person name="Richardson P."/>
            <person name="Kozyavkin S."/>
            <person name="Weimer B.C."/>
            <person name="Mills D.A."/>
        </authorList>
    </citation>
    <scope>NUCLEOTIDE SEQUENCE [LARGE SCALE GENOMIC DNA]</scope>
    <source>
        <strain>SK11</strain>
    </source>
</reference>
<evidence type="ECO:0000255" key="1">
    <source>
        <dbReference type="HAMAP-Rule" id="MF_00133"/>
    </source>
</evidence>
<dbReference type="EC" id="4.2.1.20" evidence="1"/>
<dbReference type="EMBL" id="CP000425">
    <property type="protein sequence ID" value="ABJ73055.1"/>
    <property type="molecule type" value="Genomic_DNA"/>
</dbReference>
<dbReference type="RefSeq" id="WP_011676415.1">
    <property type="nucleotide sequence ID" value="NC_008527.1"/>
</dbReference>
<dbReference type="SMR" id="Q02YB7"/>
<dbReference type="GeneID" id="61109692"/>
<dbReference type="KEGG" id="llc:LACR_1549"/>
<dbReference type="HOGENOM" id="CLU_016734_3_1_9"/>
<dbReference type="UniPathway" id="UPA00035">
    <property type="reaction ID" value="UER00044"/>
</dbReference>
<dbReference type="Proteomes" id="UP000000240">
    <property type="component" value="Chromosome"/>
</dbReference>
<dbReference type="GO" id="GO:0005737">
    <property type="term" value="C:cytoplasm"/>
    <property type="evidence" value="ECO:0007669"/>
    <property type="project" value="TreeGrafter"/>
</dbReference>
<dbReference type="GO" id="GO:0004834">
    <property type="term" value="F:tryptophan synthase activity"/>
    <property type="evidence" value="ECO:0007669"/>
    <property type="project" value="UniProtKB-UniRule"/>
</dbReference>
<dbReference type="CDD" id="cd06446">
    <property type="entry name" value="Trp-synth_B"/>
    <property type="match status" value="1"/>
</dbReference>
<dbReference type="FunFam" id="3.40.50.1100:FF:000001">
    <property type="entry name" value="Tryptophan synthase beta chain"/>
    <property type="match status" value="1"/>
</dbReference>
<dbReference type="FunFam" id="3.40.50.1100:FF:000004">
    <property type="entry name" value="Tryptophan synthase beta chain"/>
    <property type="match status" value="1"/>
</dbReference>
<dbReference type="Gene3D" id="3.40.50.1100">
    <property type="match status" value="2"/>
</dbReference>
<dbReference type="HAMAP" id="MF_00133">
    <property type="entry name" value="Trp_synth_beta"/>
    <property type="match status" value="1"/>
</dbReference>
<dbReference type="InterPro" id="IPR006653">
    <property type="entry name" value="Trp_synth_b_CS"/>
</dbReference>
<dbReference type="InterPro" id="IPR006654">
    <property type="entry name" value="Trp_synth_beta"/>
</dbReference>
<dbReference type="InterPro" id="IPR023026">
    <property type="entry name" value="Trp_synth_beta/beta-like"/>
</dbReference>
<dbReference type="InterPro" id="IPR001926">
    <property type="entry name" value="TrpB-like_PALP"/>
</dbReference>
<dbReference type="InterPro" id="IPR036052">
    <property type="entry name" value="TrpB-like_PALP_sf"/>
</dbReference>
<dbReference type="NCBIfam" id="TIGR00263">
    <property type="entry name" value="trpB"/>
    <property type="match status" value="1"/>
</dbReference>
<dbReference type="PANTHER" id="PTHR48077:SF3">
    <property type="entry name" value="TRYPTOPHAN SYNTHASE"/>
    <property type="match status" value="1"/>
</dbReference>
<dbReference type="PANTHER" id="PTHR48077">
    <property type="entry name" value="TRYPTOPHAN SYNTHASE-RELATED"/>
    <property type="match status" value="1"/>
</dbReference>
<dbReference type="Pfam" id="PF00291">
    <property type="entry name" value="PALP"/>
    <property type="match status" value="1"/>
</dbReference>
<dbReference type="PIRSF" id="PIRSF001413">
    <property type="entry name" value="Trp_syn_beta"/>
    <property type="match status" value="1"/>
</dbReference>
<dbReference type="SUPFAM" id="SSF53686">
    <property type="entry name" value="Tryptophan synthase beta subunit-like PLP-dependent enzymes"/>
    <property type="match status" value="1"/>
</dbReference>
<dbReference type="PROSITE" id="PS00168">
    <property type="entry name" value="TRP_SYNTHASE_BETA"/>
    <property type="match status" value="1"/>
</dbReference>
<accession>Q02YB7</accession>
<sequence length="401" mass="43687">MTYNQPNNQGFYGQFGGQFVPETLMTAVKELEVAYEDSKKDPVFQAELKELLKDYVGRENPLYFAKRLTEYAGGAKIYLKREDLNHTGAHKINNALGQVLLAKKMGKNKVIAETGAGQHGVATATAAALFGMECTIYMGEEDVKRQSLNVFRMELLGAKVHSVTDGSRVLKDAVNAALRAWVAQVEDTHYVMGSVLGPHPFPQIVRDYQAVIGQEARAQFLEKENKLPDALVACVGGGSNSMGLFYPFVNDESVEMYGVEAAGLGIDTPHHAATITKGRPGVLHGTLMDVLQDENGQILEAFSISAGLDYPGIGPEHSYFNAVGRAKYVDITDEEALEGFKILSRTEGIIPALESSHAIAYAVKLAKELGSEKTMIVCLSGRGDKDVVQVKERLEAEKEVK</sequence>
<comment type="function">
    <text evidence="1">The beta subunit is responsible for the synthesis of L-tryptophan from indole and L-serine.</text>
</comment>
<comment type="catalytic activity">
    <reaction evidence="1">
        <text>(1S,2R)-1-C-(indol-3-yl)glycerol 3-phosphate + L-serine = D-glyceraldehyde 3-phosphate + L-tryptophan + H2O</text>
        <dbReference type="Rhea" id="RHEA:10532"/>
        <dbReference type="ChEBI" id="CHEBI:15377"/>
        <dbReference type="ChEBI" id="CHEBI:33384"/>
        <dbReference type="ChEBI" id="CHEBI:57912"/>
        <dbReference type="ChEBI" id="CHEBI:58866"/>
        <dbReference type="ChEBI" id="CHEBI:59776"/>
        <dbReference type="EC" id="4.2.1.20"/>
    </reaction>
</comment>
<comment type="cofactor">
    <cofactor evidence="1">
        <name>pyridoxal 5'-phosphate</name>
        <dbReference type="ChEBI" id="CHEBI:597326"/>
    </cofactor>
</comment>
<comment type="pathway">
    <text evidence="1">Amino-acid biosynthesis; L-tryptophan biosynthesis; L-tryptophan from chorismate: step 5/5.</text>
</comment>
<comment type="subunit">
    <text evidence="1">Tetramer of two alpha and two beta chains.</text>
</comment>
<comment type="similarity">
    <text evidence="1">Belongs to the TrpB family.</text>
</comment>
<name>TRPB_LACLS</name>